<keyword id="KW-0963">Cytoplasm</keyword>
<keyword id="KW-0489">Methyltransferase</keyword>
<keyword id="KW-0949">S-adenosyl-L-methionine</keyword>
<keyword id="KW-0808">Transferase</keyword>
<keyword id="KW-0819">tRNA processing</keyword>
<protein>
    <recommendedName>
        <fullName evidence="1">tRNA (guanine-N(1)-)-methyltransferase</fullName>
        <ecNumber evidence="1">2.1.1.228</ecNumber>
    </recommendedName>
    <alternativeName>
        <fullName evidence="1">M1G-methyltransferase</fullName>
    </alternativeName>
    <alternativeName>
        <fullName evidence="1">tRNA [GM37] methyltransferase</fullName>
    </alternativeName>
</protein>
<accession>B5FS07</accession>
<dbReference type="EC" id="2.1.1.228" evidence="1"/>
<dbReference type="EMBL" id="CP001144">
    <property type="protein sequence ID" value="ACH74706.1"/>
    <property type="molecule type" value="Genomic_DNA"/>
</dbReference>
<dbReference type="RefSeq" id="WP_000469804.1">
    <property type="nucleotide sequence ID" value="NC_011205.1"/>
</dbReference>
<dbReference type="SMR" id="B5FS07"/>
<dbReference type="KEGG" id="sed:SeD_A3002"/>
<dbReference type="HOGENOM" id="CLU_047363_0_1_6"/>
<dbReference type="Proteomes" id="UP000008322">
    <property type="component" value="Chromosome"/>
</dbReference>
<dbReference type="GO" id="GO:0005829">
    <property type="term" value="C:cytosol"/>
    <property type="evidence" value="ECO:0007669"/>
    <property type="project" value="TreeGrafter"/>
</dbReference>
<dbReference type="GO" id="GO:0052906">
    <property type="term" value="F:tRNA (guanine(37)-N1)-methyltransferase activity"/>
    <property type="evidence" value="ECO:0007669"/>
    <property type="project" value="UniProtKB-UniRule"/>
</dbReference>
<dbReference type="GO" id="GO:0002939">
    <property type="term" value="P:tRNA N1-guanine methylation"/>
    <property type="evidence" value="ECO:0007669"/>
    <property type="project" value="TreeGrafter"/>
</dbReference>
<dbReference type="CDD" id="cd18080">
    <property type="entry name" value="TrmD-like"/>
    <property type="match status" value="1"/>
</dbReference>
<dbReference type="FunFam" id="1.10.1270.20:FF:000001">
    <property type="entry name" value="tRNA (guanine-N(1)-)-methyltransferase"/>
    <property type="match status" value="1"/>
</dbReference>
<dbReference type="FunFam" id="3.40.1280.10:FF:000001">
    <property type="entry name" value="tRNA (guanine-N(1)-)-methyltransferase"/>
    <property type="match status" value="1"/>
</dbReference>
<dbReference type="Gene3D" id="3.40.1280.10">
    <property type="match status" value="1"/>
</dbReference>
<dbReference type="Gene3D" id="1.10.1270.20">
    <property type="entry name" value="tRNA(m1g37)methyltransferase, domain 2"/>
    <property type="match status" value="1"/>
</dbReference>
<dbReference type="HAMAP" id="MF_00605">
    <property type="entry name" value="TrmD"/>
    <property type="match status" value="1"/>
</dbReference>
<dbReference type="InterPro" id="IPR029028">
    <property type="entry name" value="Alpha/beta_knot_MTases"/>
</dbReference>
<dbReference type="InterPro" id="IPR023148">
    <property type="entry name" value="tRNA_m1G_MeTrfase_C_sf"/>
</dbReference>
<dbReference type="InterPro" id="IPR002649">
    <property type="entry name" value="tRNA_m1G_MeTrfase_TrmD"/>
</dbReference>
<dbReference type="InterPro" id="IPR029026">
    <property type="entry name" value="tRNA_m1G_MTases_N"/>
</dbReference>
<dbReference type="InterPro" id="IPR016009">
    <property type="entry name" value="tRNA_MeTrfase_TRMD/TRM10"/>
</dbReference>
<dbReference type="NCBIfam" id="NF000648">
    <property type="entry name" value="PRK00026.1"/>
    <property type="match status" value="1"/>
</dbReference>
<dbReference type="NCBIfam" id="TIGR00088">
    <property type="entry name" value="trmD"/>
    <property type="match status" value="1"/>
</dbReference>
<dbReference type="PANTHER" id="PTHR46417">
    <property type="entry name" value="TRNA (GUANINE-N(1)-)-METHYLTRANSFERASE"/>
    <property type="match status" value="1"/>
</dbReference>
<dbReference type="PANTHER" id="PTHR46417:SF1">
    <property type="entry name" value="TRNA (GUANINE-N(1)-)-METHYLTRANSFERASE"/>
    <property type="match status" value="1"/>
</dbReference>
<dbReference type="Pfam" id="PF01746">
    <property type="entry name" value="tRNA_m1G_MT"/>
    <property type="match status" value="1"/>
</dbReference>
<dbReference type="PIRSF" id="PIRSF000386">
    <property type="entry name" value="tRNA_mtase"/>
    <property type="match status" value="1"/>
</dbReference>
<dbReference type="SUPFAM" id="SSF75217">
    <property type="entry name" value="alpha/beta knot"/>
    <property type="match status" value="1"/>
</dbReference>
<feature type="chain" id="PRO_1000130201" description="tRNA (guanine-N(1)-)-methyltransferase">
    <location>
        <begin position="1"/>
        <end position="255"/>
    </location>
</feature>
<feature type="binding site" evidence="1">
    <location>
        <position position="113"/>
    </location>
    <ligand>
        <name>S-adenosyl-L-methionine</name>
        <dbReference type="ChEBI" id="CHEBI:59789"/>
    </ligand>
</feature>
<feature type="binding site" evidence="1">
    <location>
        <begin position="133"/>
        <end position="138"/>
    </location>
    <ligand>
        <name>S-adenosyl-L-methionine</name>
        <dbReference type="ChEBI" id="CHEBI:59789"/>
    </ligand>
</feature>
<organism>
    <name type="scientific">Salmonella dublin (strain CT_02021853)</name>
    <dbReference type="NCBI Taxonomy" id="439851"/>
    <lineage>
        <taxon>Bacteria</taxon>
        <taxon>Pseudomonadati</taxon>
        <taxon>Pseudomonadota</taxon>
        <taxon>Gammaproteobacteria</taxon>
        <taxon>Enterobacterales</taxon>
        <taxon>Enterobacteriaceae</taxon>
        <taxon>Salmonella</taxon>
    </lineage>
</organism>
<sequence>MFIGIVSLFPEMFRAITDYGVTGRAVKKGLLNIQSWSPRDFAHDRHRTVDDRPYGGGPGMLMMVQPLRDAIHAAKAAAGEGAKVIYLSPQGRKLDQAGVSELATNQKLILVCGRYEGVDERVIQTEIDEEWSIGDYVLSGGELPAMTLIDSVARFIPGVLGHEASAIEDSFADGLLDCPHYTRPEVLEGMEVPPVLLSGNHAEIRRWRLKQSLGRTWLRRPELLENLALTEEQARLLAEFKTEHAQQQHKHDGMA</sequence>
<proteinExistence type="inferred from homology"/>
<reference key="1">
    <citation type="journal article" date="2011" name="J. Bacteriol.">
        <title>Comparative genomics of 28 Salmonella enterica isolates: evidence for CRISPR-mediated adaptive sublineage evolution.</title>
        <authorList>
            <person name="Fricke W.F."/>
            <person name="Mammel M.K."/>
            <person name="McDermott P.F."/>
            <person name="Tartera C."/>
            <person name="White D.G."/>
            <person name="Leclerc J.E."/>
            <person name="Ravel J."/>
            <person name="Cebula T.A."/>
        </authorList>
    </citation>
    <scope>NUCLEOTIDE SEQUENCE [LARGE SCALE GENOMIC DNA]</scope>
    <source>
        <strain>CT_02021853</strain>
    </source>
</reference>
<gene>
    <name evidence="1" type="primary">trmD</name>
    <name type="ordered locus">SeD_A3002</name>
</gene>
<comment type="function">
    <text evidence="1">Specifically methylates guanosine-37 in various tRNAs.</text>
</comment>
<comment type="catalytic activity">
    <reaction evidence="1">
        <text>guanosine(37) in tRNA + S-adenosyl-L-methionine = N(1)-methylguanosine(37) in tRNA + S-adenosyl-L-homocysteine + H(+)</text>
        <dbReference type="Rhea" id="RHEA:36899"/>
        <dbReference type="Rhea" id="RHEA-COMP:10145"/>
        <dbReference type="Rhea" id="RHEA-COMP:10147"/>
        <dbReference type="ChEBI" id="CHEBI:15378"/>
        <dbReference type="ChEBI" id="CHEBI:57856"/>
        <dbReference type="ChEBI" id="CHEBI:59789"/>
        <dbReference type="ChEBI" id="CHEBI:73542"/>
        <dbReference type="ChEBI" id="CHEBI:74269"/>
        <dbReference type="EC" id="2.1.1.228"/>
    </reaction>
</comment>
<comment type="subunit">
    <text evidence="1">Homodimer.</text>
</comment>
<comment type="subcellular location">
    <subcellularLocation>
        <location evidence="1">Cytoplasm</location>
    </subcellularLocation>
</comment>
<comment type="similarity">
    <text evidence="1">Belongs to the RNA methyltransferase TrmD family.</text>
</comment>
<name>TRMD_SALDC</name>
<evidence type="ECO:0000255" key="1">
    <source>
        <dbReference type="HAMAP-Rule" id="MF_00605"/>
    </source>
</evidence>